<proteinExistence type="inferred from homology"/>
<reference key="1">
    <citation type="journal article" date="2000" name="Nature">
        <title>Complete genome sequence of Pseudomonas aeruginosa PAO1, an opportunistic pathogen.</title>
        <authorList>
            <person name="Stover C.K."/>
            <person name="Pham X.-Q.T."/>
            <person name="Erwin A.L."/>
            <person name="Mizoguchi S.D."/>
            <person name="Warrener P."/>
            <person name="Hickey M.J."/>
            <person name="Brinkman F.S.L."/>
            <person name="Hufnagle W.O."/>
            <person name="Kowalik D.J."/>
            <person name="Lagrou M."/>
            <person name="Garber R.L."/>
            <person name="Goltry L."/>
            <person name="Tolentino E."/>
            <person name="Westbrock-Wadman S."/>
            <person name="Yuan Y."/>
            <person name="Brody L.L."/>
            <person name="Coulter S.N."/>
            <person name="Folger K.R."/>
            <person name="Kas A."/>
            <person name="Larbig K."/>
            <person name="Lim R.M."/>
            <person name="Smith K.A."/>
            <person name="Spencer D.H."/>
            <person name="Wong G.K.-S."/>
            <person name="Wu Z."/>
            <person name="Paulsen I.T."/>
            <person name="Reizer J."/>
            <person name="Saier M.H. Jr."/>
            <person name="Hancock R.E.W."/>
            <person name="Lory S."/>
            <person name="Olson M.V."/>
        </authorList>
    </citation>
    <scope>NUCLEOTIDE SEQUENCE [LARGE SCALE GENOMIC DNA]</scope>
    <source>
        <strain>ATCC 15692 / DSM 22644 / CIP 104116 / JCM 14847 / LMG 12228 / 1C / PRS 101 / PAO1</strain>
    </source>
</reference>
<sequence>MDWQTLLTRERLGKPVHSNDELGRSAFHKDHDRIIFSGAFRRLGRKTQVHPVSSNDHIHTRLTHSLEVACVGRSLGMRVGEILREELPEWCDPSDLGVIVQSACLAHDIGNPPFGHSGEDAIRNWFQQAAGRGWLDEMSDAERSDFLHFEGNAQGFRVLTQLEYHQFDGGTRLTYATLGTYLKYPWTSRHAEALGYKKHKFGCYQSELPLLEQITHKLGMPQLDDERWARHPLVYLMEAADDICYGLIDLEDGLEMELLEYSEVEALLLGLVGDDLPDTYRQLGPRDSRRRKLAILRGKAIEHLTNAAARAFVDQQQALLAGQLAGDLVEHMHGPAKLCVQRAKAIAREKIFQDKRKTLHEIGAYTTLEILLNAFCGAALEQYGGHTPSFKNRRILDLLGRNAPDPQWPLYRAFLQVIDFIAGMTDSYATEMAREMTGRSSPS</sequence>
<accession>Q9HZG5</accession>
<gene>
    <name type="primary">dgt2</name>
    <name type="ordered locus">PA3043</name>
</gene>
<organism>
    <name type="scientific">Pseudomonas aeruginosa (strain ATCC 15692 / DSM 22644 / CIP 104116 / JCM 14847 / LMG 12228 / 1C / PRS 101 / PAO1)</name>
    <dbReference type="NCBI Taxonomy" id="208964"/>
    <lineage>
        <taxon>Bacteria</taxon>
        <taxon>Pseudomonadati</taxon>
        <taxon>Pseudomonadota</taxon>
        <taxon>Gammaproteobacteria</taxon>
        <taxon>Pseudomonadales</taxon>
        <taxon>Pseudomonadaceae</taxon>
        <taxon>Pseudomonas</taxon>
    </lineage>
</organism>
<evidence type="ECO:0000255" key="1">
    <source>
        <dbReference type="HAMAP-Rule" id="MF_01213"/>
    </source>
</evidence>
<evidence type="ECO:0000255" key="2">
    <source>
        <dbReference type="PROSITE-ProRule" id="PRU01175"/>
    </source>
</evidence>
<protein>
    <recommendedName>
        <fullName evidence="1">Deoxyguanosinetriphosphate triphosphohydrolase-like protein</fullName>
    </recommendedName>
</protein>
<keyword id="KW-0378">Hydrolase</keyword>
<keyword id="KW-1185">Reference proteome</keyword>
<comment type="similarity">
    <text evidence="1">Belongs to the dGTPase family. Type 3 subfamily.</text>
</comment>
<name>DGTL2_PSEAE</name>
<dbReference type="EMBL" id="AE004091">
    <property type="protein sequence ID" value="AAG06431.1"/>
    <property type="molecule type" value="Genomic_DNA"/>
</dbReference>
<dbReference type="PIR" id="D83265">
    <property type="entry name" value="D83265"/>
</dbReference>
<dbReference type="RefSeq" id="NP_251733.1">
    <property type="nucleotide sequence ID" value="NC_002516.2"/>
</dbReference>
<dbReference type="RefSeq" id="WP_003091265.1">
    <property type="nucleotide sequence ID" value="NZ_QZGE01000009.1"/>
</dbReference>
<dbReference type="SMR" id="Q9HZG5"/>
<dbReference type="STRING" id="208964.PA3043"/>
<dbReference type="PaxDb" id="208964-PA3043"/>
<dbReference type="GeneID" id="882872"/>
<dbReference type="KEGG" id="pae:PA3043"/>
<dbReference type="PATRIC" id="fig|208964.12.peg.3193"/>
<dbReference type="PseudoCAP" id="PA3043"/>
<dbReference type="HOGENOM" id="CLU_028163_2_0_6"/>
<dbReference type="InParanoid" id="Q9HZG5"/>
<dbReference type="OrthoDB" id="9803619at2"/>
<dbReference type="PhylomeDB" id="Q9HZG5"/>
<dbReference type="BioCyc" id="PAER208964:G1FZ6-3096-MONOMER"/>
<dbReference type="Proteomes" id="UP000002438">
    <property type="component" value="Chromosome"/>
</dbReference>
<dbReference type="GO" id="GO:0008832">
    <property type="term" value="F:dGTPase activity"/>
    <property type="evidence" value="ECO:0000318"/>
    <property type="project" value="GO_Central"/>
</dbReference>
<dbReference type="GO" id="GO:0006203">
    <property type="term" value="P:dGTP catabolic process"/>
    <property type="evidence" value="ECO:0000318"/>
    <property type="project" value="GO_Central"/>
</dbReference>
<dbReference type="CDD" id="cd00077">
    <property type="entry name" value="HDc"/>
    <property type="match status" value="1"/>
</dbReference>
<dbReference type="FunFam" id="1.10.3410.10:FF:000002">
    <property type="entry name" value="Deoxyguanosinetriphosphate triphosphohydrolase-like protein"/>
    <property type="match status" value="1"/>
</dbReference>
<dbReference type="Gene3D" id="1.10.3550.10">
    <property type="entry name" value="eoxyguanosinetriphosphate triphosphohydrolase domain-like"/>
    <property type="match status" value="1"/>
</dbReference>
<dbReference type="Gene3D" id="1.10.3210.10">
    <property type="entry name" value="Hypothetical protein af1432"/>
    <property type="match status" value="1"/>
</dbReference>
<dbReference type="Gene3D" id="1.10.3410.10">
    <property type="entry name" value="putative deoxyguanosinetriphosphate triphosphohydrolase like domain"/>
    <property type="match status" value="1"/>
</dbReference>
<dbReference type="HAMAP" id="MF_01213">
    <property type="entry name" value="dGTPase_type3"/>
    <property type="match status" value="1"/>
</dbReference>
<dbReference type="InterPro" id="IPR023293">
    <property type="entry name" value="dGTP_triP_hydro_central_sf"/>
</dbReference>
<dbReference type="InterPro" id="IPR027432">
    <property type="entry name" value="dGTP_triphosphohydrolase_C"/>
</dbReference>
<dbReference type="InterPro" id="IPR006261">
    <property type="entry name" value="dGTPase"/>
</dbReference>
<dbReference type="InterPro" id="IPR050135">
    <property type="entry name" value="dGTPase-like"/>
</dbReference>
<dbReference type="InterPro" id="IPR023024">
    <property type="entry name" value="dNTPase_3"/>
</dbReference>
<dbReference type="InterPro" id="IPR003607">
    <property type="entry name" value="HD/PDEase_dom"/>
</dbReference>
<dbReference type="InterPro" id="IPR006674">
    <property type="entry name" value="HD_domain"/>
</dbReference>
<dbReference type="NCBIfam" id="TIGR01353">
    <property type="entry name" value="dGTP_triPase"/>
    <property type="match status" value="1"/>
</dbReference>
<dbReference type="NCBIfam" id="NF002205">
    <property type="entry name" value="PRK01096.1"/>
    <property type="match status" value="1"/>
</dbReference>
<dbReference type="PANTHER" id="PTHR11373:SF40">
    <property type="entry name" value="DEOXYGUANOSINETRIPHOSPHATE TRIPHOSPHOHYDROLASE-LIKE PROTEIN 2"/>
    <property type="match status" value="1"/>
</dbReference>
<dbReference type="PANTHER" id="PTHR11373">
    <property type="entry name" value="DEOXYNUCLEOSIDE TRIPHOSPHATE TRIPHOSPHOHYDROLASE"/>
    <property type="match status" value="1"/>
</dbReference>
<dbReference type="Pfam" id="PF01966">
    <property type="entry name" value="HD"/>
    <property type="match status" value="1"/>
</dbReference>
<dbReference type="SMART" id="SM00471">
    <property type="entry name" value="HDc"/>
    <property type="match status" value="1"/>
</dbReference>
<dbReference type="SUPFAM" id="SSF109604">
    <property type="entry name" value="HD-domain/PDEase-like"/>
    <property type="match status" value="1"/>
</dbReference>
<dbReference type="PROSITE" id="PS51831">
    <property type="entry name" value="HD"/>
    <property type="match status" value="1"/>
</dbReference>
<feature type="chain" id="PRO_0000205332" description="Deoxyguanosinetriphosphate triphosphohydrolase-like protein">
    <location>
        <begin position="1"/>
        <end position="443"/>
    </location>
</feature>
<feature type="domain" description="HD" evidence="2">
    <location>
        <begin position="61"/>
        <end position="246"/>
    </location>
</feature>